<dbReference type="EMBL" id="AE017308">
    <property type="protein sequence ID" value="AAT28020.1"/>
    <property type="molecule type" value="Genomic_DNA"/>
</dbReference>
<dbReference type="RefSeq" id="WP_011265054.1">
    <property type="nucleotide sequence ID" value="NC_006908.1"/>
</dbReference>
<dbReference type="SMR" id="Q6KHB0"/>
<dbReference type="STRING" id="267748.MMOB5340"/>
<dbReference type="KEGG" id="mmo:MMOB5340"/>
<dbReference type="eggNOG" id="COG0222">
    <property type="taxonomic scope" value="Bacteria"/>
</dbReference>
<dbReference type="HOGENOM" id="CLU_086499_3_2_14"/>
<dbReference type="OrthoDB" id="9811748at2"/>
<dbReference type="Proteomes" id="UP000009072">
    <property type="component" value="Chromosome"/>
</dbReference>
<dbReference type="GO" id="GO:0022625">
    <property type="term" value="C:cytosolic large ribosomal subunit"/>
    <property type="evidence" value="ECO:0007669"/>
    <property type="project" value="TreeGrafter"/>
</dbReference>
<dbReference type="GO" id="GO:0003729">
    <property type="term" value="F:mRNA binding"/>
    <property type="evidence" value="ECO:0007669"/>
    <property type="project" value="TreeGrafter"/>
</dbReference>
<dbReference type="GO" id="GO:0003735">
    <property type="term" value="F:structural constituent of ribosome"/>
    <property type="evidence" value="ECO:0007669"/>
    <property type="project" value="InterPro"/>
</dbReference>
<dbReference type="GO" id="GO:0006412">
    <property type="term" value="P:translation"/>
    <property type="evidence" value="ECO:0007669"/>
    <property type="project" value="UniProtKB-UniRule"/>
</dbReference>
<dbReference type="FunFam" id="3.30.1390.10:FF:000001">
    <property type="entry name" value="50S ribosomal protein L7/L12"/>
    <property type="match status" value="1"/>
</dbReference>
<dbReference type="Gene3D" id="3.30.1390.10">
    <property type="match status" value="1"/>
</dbReference>
<dbReference type="Gene3D" id="1.20.5.710">
    <property type="entry name" value="Single helix bin"/>
    <property type="match status" value="1"/>
</dbReference>
<dbReference type="HAMAP" id="MF_00368">
    <property type="entry name" value="Ribosomal_bL12"/>
    <property type="match status" value="1"/>
</dbReference>
<dbReference type="InterPro" id="IPR000206">
    <property type="entry name" value="Ribosomal_bL12"/>
</dbReference>
<dbReference type="InterPro" id="IPR013823">
    <property type="entry name" value="Ribosomal_bL12_C"/>
</dbReference>
<dbReference type="InterPro" id="IPR014719">
    <property type="entry name" value="Ribosomal_bL12_C/ClpS-like"/>
</dbReference>
<dbReference type="InterPro" id="IPR008932">
    <property type="entry name" value="Ribosomal_bL12_oligo"/>
</dbReference>
<dbReference type="InterPro" id="IPR036235">
    <property type="entry name" value="Ribosomal_bL12_oligo_N_sf"/>
</dbReference>
<dbReference type="NCBIfam" id="TIGR00855">
    <property type="entry name" value="L12"/>
    <property type="match status" value="1"/>
</dbReference>
<dbReference type="PANTHER" id="PTHR45987">
    <property type="entry name" value="39S RIBOSOMAL PROTEIN L12"/>
    <property type="match status" value="1"/>
</dbReference>
<dbReference type="PANTHER" id="PTHR45987:SF4">
    <property type="entry name" value="LARGE RIBOSOMAL SUBUNIT PROTEIN BL12M"/>
    <property type="match status" value="1"/>
</dbReference>
<dbReference type="Pfam" id="PF00542">
    <property type="entry name" value="Ribosomal_L12"/>
    <property type="match status" value="1"/>
</dbReference>
<dbReference type="Pfam" id="PF16320">
    <property type="entry name" value="Ribosomal_L12_N"/>
    <property type="match status" value="1"/>
</dbReference>
<dbReference type="SUPFAM" id="SSF54736">
    <property type="entry name" value="ClpS-like"/>
    <property type="match status" value="1"/>
</dbReference>
<dbReference type="SUPFAM" id="SSF48300">
    <property type="entry name" value="Ribosomal protein L7/12, oligomerisation (N-terminal) domain"/>
    <property type="match status" value="1"/>
</dbReference>
<proteinExistence type="inferred from homology"/>
<comment type="function">
    <text evidence="1">Forms part of the ribosomal stalk which helps the ribosome interact with GTP-bound translation factors. Is thus essential for accurate translation.</text>
</comment>
<comment type="subunit">
    <text evidence="1">Homodimer. Part of the ribosomal stalk of the 50S ribosomal subunit. Forms a multimeric L10(L12)X complex, where L10 forms an elongated spine to which 2 to 4 L12 dimers bind in a sequential fashion. Binds GTP-bound translation factors.</text>
</comment>
<comment type="similarity">
    <text evidence="1">Belongs to the bacterial ribosomal protein bL12 family.</text>
</comment>
<organism>
    <name type="scientific">Mycoplasma mobile (strain ATCC 43663 / 163K / NCTC 11711)</name>
    <name type="common">Mesomycoplasma mobile</name>
    <dbReference type="NCBI Taxonomy" id="267748"/>
    <lineage>
        <taxon>Bacteria</taxon>
        <taxon>Bacillati</taxon>
        <taxon>Mycoplasmatota</taxon>
        <taxon>Mycoplasmoidales</taxon>
        <taxon>Metamycoplasmataceae</taxon>
        <taxon>Mesomycoplasma</taxon>
    </lineage>
</organism>
<keyword id="KW-1185">Reference proteome</keyword>
<keyword id="KW-0687">Ribonucleoprotein</keyword>
<keyword id="KW-0689">Ribosomal protein</keyword>
<protein>
    <recommendedName>
        <fullName evidence="1">Large ribosomal subunit protein bL12</fullName>
    </recommendedName>
    <alternativeName>
        <fullName evidence="2">50S ribosomal protein L7/L12</fullName>
    </alternativeName>
</protein>
<name>RL7_MYCM1</name>
<reference key="1">
    <citation type="journal article" date="2004" name="Genome Res.">
        <title>The complete genome and proteome of Mycoplasma mobile.</title>
        <authorList>
            <person name="Jaffe J.D."/>
            <person name="Stange-Thomann N."/>
            <person name="Smith C."/>
            <person name="DeCaprio D."/>
            <person name="Fisher S."/>
            <person name="Butler J."/>
            <person name="Calvo S."/>
            <person name="Elkins T."/>
            <person name="FitzGerald M.G."/>
            <person name="Hafez N."/>
            <person name="Kodira C.D."/>
            <person name="Major J."/>
            <person name="Wang S."/>
            <person name="Wilkinson J."/>
            <person name="Nicol R."/>
            <person name="Nusbaum C."/>
            <person name="Birren B."/>
            <person name="Berg H.C."/>
            <person name="Church G.M."/>
        </authorList>
    </citation>
    <scope>NUCLEOTIDE SEQUENCE [LARGE SCALE GENOMIC DNA]</scope>
    <source>
        <strain>ATCC 43663 / NCTC 11711 / 163 K</strain>
    </source>
</reference>
<accession>Q6KHB0</accession>
<feature type="chain" id="PRO_1000195815" description="Large ribosomal subunit protein bL12">
    <location>
        <begin position="1"/>
        <end position="124"/>
    </location>
</feature>
<sequence>MAKLTKESFIQSLKEMNIKEVMELVNAMKEEFGIDPSAVVVAGGAAGGAEVAEKTEVTITLKNAGGNKVPVIKKVREISPELSLMDAKKLVDSAPAKLKDNVKPEEAEEIKAAFAALGAEISID</sequence>
<evidence type="ECO:0000255" key="1">
    <source>
        <dbReference type="HAMAP-Rule" id="MF_00368"/>
    </source>
</evidence>
<evidence type="ECO:0000305" key="2"/>
<gene>
    <name evidence="1" type="primary">rplL</name>
    <name type="ordered locus">MMOB5340</name>
</gene>